<dbReference type="EC" id="2.7.1.167" evidence="1"/>
<dbReference type="EC" id="2.7.7.70" evidence="1"/>
<dbReference type="EMBL" id="CU928164">
    <property type="protein sequence ID" value="CAR19664.1"/>
    <property type="molecule type" value="Genomic_DNA"/>
</dbReference>
<dbReference type="RefSeq" id="WP_000869178.1">
    <property type="nucleotide sequence ID" value="NC_011750.1"/>
</dbReference>
<dbReference type="RefSeq" id="YP_002409452.1">
    <property type="nucleotide sequence ID" value="NC_011750.1"/>
</dbReference>
<dbReference type="SMR" id="B7NJR5"/>
<dbReference type="STRING" id="585057.ECIAI39_3548"/>
<dbReference type="GeneID" id="75205361"/>
<dbReference type="KEGG" id="ect:ECIAI39_3548"/>
<dbReference type="PATRIC" id="fig|585057.6.peg.3676"/>
<dbReference type="HOGENOM" id="CLU_021150_2_1_6"/>
<dbReference type="UniPathway" id="UPA00356">
    <property type="reaction ID" value="UER00437"/>
</dbReference>
<dbReference type="UniPathway" id="UPA00356">
    <property type="reaction ID" value="UER00439"/>
</dbReference>
<dbReference type="Proteomes" id="UP000000749">
    <property type="component" value="Chromosome"/>
</dbReference>
<dbReference type="GO" id="GO:0005829">
    <property type="term" value="C:cytosol"/>
    <property type="evidence" value="ECO:0007669"/>
    <property type="project" value="TreeGrafter"/>
</dbReference>
<dbReference type="GO" id="GO:0005524">
    <property type="term" value="F:ATP binding"/>
    <property type="evidence" value="ECO:0007669"/>
    <property type="project" value="UniProtKB-UniRule"/>
</dbReference>
<dbReference type="GO" id="GO:0033785">
    <property type="term" value="F:heptose 7-phosphate kinase activity"/>
    <property type="evidence" value="ECO:0007669"/>
    <property type="project" value="UniProtKB-UniRule"/>
</dbReference>
<dbReference type="GO" id="GO:0033786">
    <property type="term" value="F:heptose-1-phosphate adenylyltransferase activity"/>
    <property type="evidence" value="ECO:0007669"/>
    <property type="project" value="UniProtKB-UniRule"/>
</dbReference>
<dbReference type="GO" id="GO:0016773">
    <property type="term" value="F:phosphotransferase activity, alcohol group as acceptor"/>
    <property type="evidence" value="ECO:0007669"/>
    <property type="project" value="InterPro"/>
</dbReference>
<dbReference type="GO" id="GO:0097171">
    <property type="term" value="P:ADP-L-glycero-beta-D-manno-heptose biosynthetic process"/>
    <property type="evidence" value="ECO:0007669"/>
    <property type="project" value="UniProtKB-UniPathway"/>
</dbReference>
<dbReference type="CDD" id="cd01172">
    <property type="entry name" value="RfaE_like"/>
    <property type="match status" value="1"/>
</dbReference>
<dbReference type="FunFam" id="3.40.1190.20:FF:000002">
    <property type="entry name" value="Bifunctional protein HldE"/>
    <property type="match status" value="1"/>
</dbReference>
<dbReference type="FunFam" id="3.40.50.620:FF:000028">
    <property type="entry name" value="Bifunctional protein HldE"/>
    <property type="match status" value="1"/>
</dbReference>
<dbReference type="Gene3D" id="3.40.1190.20">
    <property type="match status" value="1"/>
</dbReference>
<dbReference type="Gene3D" id="3.40.50.620">
    <property type="entry name" value="HUPs"/>
    <property type="match status" value="1"/>
</dbReference>
<dbReference type="HAMAP" id="MF_01603">
    <property type="entry name" value="HldE"/>
    <property type="match status" value="1"/>
</dbReference>
<dbReference type="InterPro" id="IPR023030">
    <property type="entry name" value="Bifunc_HldE"/>
</dbReference>
<dbReference type="InterPro" id="IPR002173">
    <property type="entry name" value="Carboh/pur_kinase_PfkB_CS"/>
</dbReference>
<dbReference type="InterPro" id="IPR004821">
    <property type="entry name" value="Cyt_trans-like"/>
</dbReference>
<dbReference type="InterPro" id="IPR011611">
    <property type="entry name" value="PfkB_dom"/>
</dbReference>
<dbReference type="InterPro" id="IPR011913">
    <property type="entry name" value="RfaE_dom_I"/>
</dbReference>
<dbReference type="InterPro" id="IPR011914">
    <property type="entry name" value="RfaE_dom_II"/>
</dbReference>
<dbReference type="InterPro" id="IPR029056">
    <property type="entry name" value="Ribokinase-like"/>
</dbReference>
<dbReference type="InterPro" id="IPR014729">
    <property type="entry name" value="Rossmann-like_a/b/a_fold"/>
</dbReference>
<dbReference type="NCBIfam" id="TIGR00125">
    <property type="entry name" value="cyt_tran_rel"/>
    <property type="match status" value="1"/>
</dbReference>
<dbReference type="NCBIfam" id="NF008454">
    <property type="entry name" value="PRK11316.1"/>
    <property type="match status" value="1"/>
</dbReference>
<dbReference type="NCBIfam" id="TIGR02198">
    <property type="entry name" value="rfaE_dom_I"/>
    <property type="match status" value="1"/>
</dbReference>
<dbReference type="NCBIfam" id="TIGR02199">
    <property type="entry name" value="rfaE_dom_II"/>
    <property type="match status" value="1"/>
</dbReference>
<dbReference type="PANTHER" id="PTHR46969">
    <property type="entry name" value="BIFUNCTIONAL PROTEIN HLDE"/>
    <property type="match status" value="1"/>
</dbReference>
<dbReference type="PANTHER" id="PTHR46969:SF1">
    <property type="entry name" value="BIFUNCTIONAL PROTEIN HLDE"/>
    <property type="match status" value="1"/>
</dbReference>
<dbReference type="Pfam" id="PF01467">
    <property type="entry name" value="CTP_transf_like"/>
    <property type="match status" value="1"/>
</dbReference>
<dbReference type="Pfam" id="PF00294">
    <property type="entry name" value="PfkB"/>
    <property type="match status" value="1"/>
</dbReference>
<dbReference type="SUPFAM" id="SSF52374">
    <property type="entry name" value="Nucleotidylyl transferase"/>
    <property type="match status" value="1"/>
</dbReference>
<dbReference type="SUPFAM" id="SSF53613">
    <property type="entry name" value="Ribokinase-like"/>
    <property type="match status" value="1"/>
</dbReference>
<dbReference type="PROSITE" id="PS00583">
    <property type="entry name" value="PFKB_KINASES_1"/>
    <property type="match status" value="1"/>
</dbReference>
<name>HLDE_ECO7I</name>
<accession>B7NJR5</accession>
<gene>
    <name evidence="1" type="primary">hldE</name>
    <name type="ordered locus">ECIAI39_3548</name>
</gene>
<keyword id="KW-0007">Acetylation</keyword>
<keyword id="KW-0067">ATP-binding</keyword>
<keyword id="KW-0119">Carbohydrate metabolism</keyword>
<keyword id="KW-0418">Kinase</keyword>
<keyword id="KW-0511">Multifunctional enzyme</keyword>
<keyword id="KW-0547">Nucleotide-binding</keyword>
<keyword id="KW-0548">Nucleotidyltransferase</keyword>
<keyword id="KW-0808">Transferase</keyword>
<feature type="chain" id="PRO_1000185803" description="Bifunctional protein HldE">
    <location>
        <begin position="1"/>
        <end position="477"/>
    </location>
</feature>
<feature type="region of interest" description="Ribokinase">
    <location>
        <begin position="1"/>
        <end position="318"/>
    </location>
</feature>
<feature type="region of interest" description="Cytidylyltransferase">
    <location>
        <begin position="344"/>
        <end position="477"/>
    </location>
</feature>
<feature type="active site" evidence="1">
    <location>
        <position position="264"/>
    </location>
</feature>
<feature type="binding site" evidence="1">
    <location>
        <begin position="195"/>
        <end position="198"/>
    </location>
    <ligand>
        <name>ATP</name>
        <dbReference type="ChEBI" id="CHEBI:30616"/>
    </ligand>
</feature>
<feature type="modified residue" description="N6-acetyllysine" evidence="1">
    <location>
        <position position="179"/>
    </location>
</feature>
<evidence type="ECO:0000255" key="1">
    <source>
        <dbReference type="HAMAP-Rule" id="MF_01603"/>
    </source>
</evidence>
<organism>
    <name type="scientific">Escherichia coli O7:K1 (strain IAI39 / ExPEC)</name>
    <dbReference type="NCBI Taxonomy" id="585057"/>
    <lineage>
        <taxon>Bacteria</taxon>
        <taxon>Pseudomonadati</taxon>
        <taxon>Pseudomonadota</taxon>
        <taxon>Gammaproteobacteria</taxon>
        <taxon>Enterobacterales</taxon>
        <taxon>Enterobacteriaceae</taxon>
        <taxon>Escherichia</taxon>
    </lineage>
</organism>
<proteinExistence type="inferred from homology"/>
<protein>
    <recommendedName>
        <fullName evidence="1">Bifunctional protein HldE</fullName>
    </recommendedName>
    <domain>
        <recommendedName>
            <fullName evidence="1">D-beta-D-heptose 7-phosphate kinase</fullName>
            <ecNumber evidence="1">2.7.1.167</ecNumber>
        </recommendedName>
        <alternativeName>
            <fullName evidence="1">D-beta-D-heptose 7-phosphotransferase</fullName>
        </alternativeName>
        <alternativeName>
            <fullName evidence="1">D-glycero-beta-D-manno-heptose-7-phosphate kinase</fullName>
        </alternativeName>
    </domain>
    <domain>
        <recommendedName>
            <fullName evidence="1">D-beta-D-heptose 1-phosphate adenylyltransferase</fullName>
            <ecNumber evidence="1">2.7.7.70</ecNumber>
        </recommendedName>
        <alternativeName>
            <fullName evidence="1">D-glycero-beta-D-manno-heptose 1-phosphate adenylyltransferase</fullName>
        </alternativeName>
    </domain>
</protein>
<comment type="function">
    <text evidence="1">Catalyzes the phosphorylation of D-glycero-D-manno-heptose 7-phosphate at the C-1 position to selectively form D-glycero-beta-D-manno-heptose-1,7-bisphosphate.</text>
</comment>
<comment type="function">
    <text evidence="1">Catalyzes the ADP transfer from ATP to D-glycero-beta-D-manno-heptose 1-phosphate, yielding ADP-D-glycero-beta-D-manno-heptose.</text>
</comment>
<comment type="catalytic activity">
    <reaction evidence="1">
        <text>D-glycero-beta-D-manno-heptose 7-phosphate + ATP = D-glycero-beta-D-manno-heptose 1,7-bisphosphate + ADP + H(+)</text>
        <dbReference type="Rhea" id="RHEA:27473"/>
        <dbReference type="ChEBI" id="CHEBI:15378"/>
        <dbReference type="ChEBI" id="CHEBI:30616"/>
        <dbReference type="ChEBI" id="CHEBI:60204"/>
        <dbReference type="ChEBI" id="CHEBI:60208"/>
        <dbReference type="ChEBI" id="CHEBI:456216"/>
        <dbReference type="EC" id="2.7.1.167"/>
    </reaction>
</comment>
<comment type="catalytic activity">
    <reaction evidence="1">
        <text>D-glycero-beta-D-manno-heptose 1-phosphate + ATP + H(+) = ADP-D-glycero-beta-D-manno-heptose + diphosphate</text>
        <dbReference type="Rhea" id="RHEA:27465"/>
        <dbReference type="ChEBI" id="CHEBI:15378"/>
        <dbReference type="ChEBI" id="CHEBI:30616"/>
        <dbReference type="ChEBI" id="CHEBI:33019"/>
        <dbReference type="ChEBI" id="CHEBI:59967"/>
        <dbReference type="ChEBI" id="CHEBI:61593"/>
        <dbReference type="EC" id="2.7.7.70"/>
    </reaction>
</comment>
<comment type="pathway">
    <text evidence="1">Nucleotide-sugar biosynthesis; ADP-L-glycero-beta-D-manno-heptose biosynthesis; ADP-L-glycero-beta-D-manno-heptose from D-glycero-beta-D-manno-heptose 7-phosphate: step 1/4.</text>
</comment>
<comment type="pathway">
    <text evidence="1">Nucleotide-sugar biosynthesis; ADP-L-glycero-beta-D-manno-heptose biosynthesis; ADP-L-glycero-beta-D-manno-heptose from D-glycero-beta-D-manno-heptose 7-phosphate: step 3/4.</text>
</comment>
<comment type="subunit">
    <text evidence="1">Homodimer.</text>
</comment>
<comment type="similarity">
    <text evidence="1">In the N-terminal section; belongs to the carbohydrate kinase PfkB family.</text>
</comment>
<comment type="similarity">
    <text evidence="1">In the C-terminal section; belongs to the cytidylyltransferase family.</text>
</comment>
<reference key="1">
    <citation type="journal article" date="2009" name="PLoS Genet.">
        <title>Organised genome dynamics in the Escherichia coli species results in highly diverse adaptive paths.</title>
        <authorList>
            <person name="Touchon M."/>
            <person name="Hoede C."/>
            <person name="Tenaillon O."/>
            <person name="Barbe V."/>
            <person name="Baeriswyl S."/>
            <person name="Bidet P."/>
            <person name="Bingen E."/>
            <person name="Bonacorsi S."/>
            <person name="Bouchier C."/>
            <person name="Bouvet O."/>
            <person name="Calteau A."/>
            <person name="Chiapello H."/>
            <person name="Clermont O."/>
            <person name="Cruveiller S."/>
            <person name="Danchin A."/>
            <person name="Diard M."/>
            <person name="Dossat C."/>
            <person name="Karoui M.E."/>
            <person name="Frapy E."/>
            <person name="Garry L."/>
            <person name="Ghigo J.M."/>
            <person name="Gilles A.M."/>
            <person name="Johnson J."/>
            <person name="Le Bouguenec C."/>
            <person name="Lescat M."/>
            <person name="Mangenot S."/>
            <person name="Martinez-Jehanne V."/>
            <person name="Matic I."/>
            <person name="Nassif X."/>
            <person name="Oztas S."/>
            <person name="Petit M.A."/>
            <person name="Pichon C."/>
            <person name="Rouy Z."/>
            <person name="Ruf C.S."/>
            <person name="Schneider D."/>
            <person name="Tourret J."/>
            <person name="Vacherie B."/>
            <person name="Vallenet D."/>
            <person name="Medigue C."/>
            <person name="Rocha E.P.C."/>
            <person name="Denamur E."/>
        </authorList>
    </citation>
    <scope>NUCLEOTIDE SEQUENCE [LARGE SCALE GENOMIC DNA]</scope>
    <source>
        <strain>IAI39 / ExPEC</strain>
    </source>
</reference>
<sequence length="477" mass="51051">MKVTLPEFERAGVMVVGDVMLDRYWYGPTSRISPEAPVPVVKVNTIEERPGGAANVAMNIASLGANARLVGLTGIDDAARALSKSLADVNVKCDFVSVPTHPTITKLRVLSRNQQLIRLDFEEGFEGVDPQPLHERINQALSSIGALVLSDYAKGALASVQQMIQLARKAGVPVLIDPKGTDFERYRGATLLTPNLSEFEAVVGKCKTEEEIVERGMKLIADYELSALLVTRSEQGMSLLQPGKAPLHMPTQAQEVYDVTGAGDTVIGVLAATLAAGNSLEEACFFANAAAGVVVGKLGTSTVSPIELENAVRGRADTGFGVMTEEELKLAVAAARKRGEKVVMTNGVFDILHAGHVSYLANARKLGDRLIVAVNSDASTKRLKGDSRPVNPLEQRMIVLGALEAVDWVVSFEEDTPQRLIAGILPDLLVKGGDYKPEEIAGSKEVWANGGEVLVLNFEDGCSTTNIIKKIQQDKKG</sequence>